<sequence>MNNFRNLINQSIRNYSTTTNVATKTKVYELKTYNILANNIPSFFELLGENKGSNSLGTWVTEMGSSNQVISLVEHESLDDRQMNEWNTKFQSKAAKLIEKQESLILREFPWAPFQKISNEKSNENKVWELRTYQSKPGKLGQWAIDFTTGFAERKKISEPVGVFYSEFGPLNTIVHLWPYKSFEDRFRIRDLALKNPVWVETVAKTTANLDSMESKTIIPVKL</sequence>
<reference key="1">
    <citation type="journal article" date="2005" name="Nature">
        <title>The genome of the social amoeba Dictyostelium discoideum.</title>
        <authorList>
            <person name="Eichinger L."/>
            <person name="Pachebat J.A."/>
            <person name="Gloeckner G."/>
            <person name="Rajandream M.A."/>
            <person name="Sucgang R."/>
            <person name="Berriman M."/>
            <person name="Song J."/>
            <person name="Olsen R."/>
            <person name="Szafranski K."/>
            <person name="Xu Q."/>
            <person name="Tunggal B."/>
            <person name="Kummerfeld S."/>
            <person name="Madera M."/>
            <person name="Konfortov B.A."/>
            <person name="Rivero F."/>
            <person name="Bankier A.T."/>
            <person name="Lehmann R."/>
            <person name="Hamlin N."/>
            <person name="Davies R."/>
            <person name="Gaudet P."/>
            <person name="Fey P."/>
            <person name="Pilcher K."/>
            <person name="Chen G."/>
            <person name="Saunders D."/>
            <person name="Sodergren E.J."/>
            <person name="Davis P."/>
            <person name="Kerhornou A."/>
            <person name="Nie X."/>
            <person name="Hall N."/>
            <person name="Anjard C."/>
            <person name="Hemphill L."/>
            <person name="Bason N."/>
            <person name="Farbrother P."/>
            <person name="Desany B."/>
            <person name="Just E."/>
            <person name="Morio T."/>
            <person name="Rost R."/>
            <person name="Churcher C.M."/>
            <person name="Cooper J."/>
            <person name="Haydock S."/>
            <person name="van Driessche N."/>
            <person name="Cronin A."/>
            <person name="Goodhead I."/>
            <person name="Muzny D.M."/>
            <person name="Mourier T."/>
            <person name="Pain A."/>
            <person name="Lu M."/>
            <person name="Harper D."/>
            <person name="Lindsay R."/>
            <person name="Hauser H."/>
            <person name="James K.D."/>
            <person name="Quiles M."/>
            <person name="Madan Babu M."/>
            <person name="Saito T."/>
            <person name="Buchrieser C."/>
            <person name="Wardroper A."/>
            <person name="Felder M."/>
            <person name="Thangavelu M."/>
            <person name="Johnson D."/>
            <person name="Knights A."/>
            <person name="Loulseged H."/>
            <person name="Mungall K.L."/>
            <person name="Oliver K."/>
            <person name="Price C."/>
            <person name="Quail M.A."/>
            <person name="Urushihara H."/>
            <person name="Hernandez J."/>
            <person name="Rabbinowitsch E."/>
            <person name="Steffen D."/>
            <person name="Sanders M."/>
            <person name="Ma J."/>
            <person name="Kohara Y."/>
            <person name="Sharp S."/>
            <person name="Simmonds M.N."/>
            <person name="Spiegler S."/>
            <person name="Tivey A."/>
            <person name="Sugano S."/>
            <person name="White B."/>
            <person name="Walker D."/>
            <person name="Woodward J.R."/>
            <person name="Winckler T."/>
            <person name="Tanaka Y."/>
            <person name="Shaulsky G."/>
            <person name="Schleicher M."/>
            <person name="Weinstock G.M."/>
            <person name="Rosenthal A."/>
            <person name="Cox E.C."/>
            <person name="Chisholm R.L."/>
            <person name="Gibbs R.A."/>
            <person name="Loomis W.F."/>
            <person name="Platzer M."/>
            <person name="Kay R.R."/>
            <person name="Williams J.G."/>
            <person name="Dear P.H."/>
            <person name="Noegel A.A."/>
            <person name="Barrell B.G."/>
            <person name="Kuspa A."/>
        </authorList>
    </citation>
    <scope>NUCLEOTIDE SEQUENCE [LARGE SCALE GENOMIC DNA]</scope>
    <source>
        <strain>AX4</strain>
    </source>
</reference>
<accession>Q54I58</accession>
<name>NIPSN_DICDI</name>
<evidence type="ECO:0000305" key="1"/>
<comment type="similarity">
    <text evidence="1">Belongs to the NipSnap family.</text>
</comment>
<protein>
    <recommendedName>
        <fullName>Protein NipSnap homolog</fullName>
    </recommendedName>
</protein>
<gene>
    <name type="primary">nipsnap</name>
    <name type="ORF">DDB_G0288989</name>
</gene>
<proteinExistence type="inferred from homology"/>
<feature type="chain" id="PRO_0000328032" description="Protein NipSnap homolog">
    <location>
        <begin position="1"/>
        <end position="223"/>
    </location>
</feature>
<keyword id="KW-1185">Reference proteome</keyword>
<dbReference type="EMBL" id="AAFI02000129">
    <property type="protein sequence ID" value="EAL62949.1"/>
    <property type="molecule type" value="Genomic_DNA"/>
</dbReference>
<dbReference type="RefSeq" id="XP_636452.1">
    <property type="nucleotide sequence ID" value="XM_631360.1"/>
</dbReference>
<dbReference type="SMR" id="Q54I58"/>
<dbReference type="FunCoup" id="Q54I58">
    <property type="interactions" value="126"/>
</dbReference>
<dbReference type="STRING" id="44689.Q54I58"/>
<dbReference type="PaxDb" id="44689-DDB0305168"/>
<dbReference type="EnsemblProtists" id="EAL62949">
    <property type="protein sequence ID" value="EAL62949"/>
    <property type="gene ID" value="DDB_G0288989"/>
</dbReference>
<dbReference type="GeneID" id="8626904"/>
<dbReference type="KEGG" id="ddi:DDB_G0288989"/>
<dbReference type="dictyBase" id="DDB_G0288989">
    <property type="gene designation" value="nipsnap"/>
</dbReference>
<dbReference type="VEuPathDB" id="AmoebaDB:DDB_G0288989"/>
<dbReference type="eggNOG" id="KOG2883">
    <property type="taxonomic scope" value="Eukaryota"/>
</dbReference>
<dbReference type="HOGENOM" id="CLU_085919_0_1_1"/>
<dbReference type="InParanoid" id="Q54I58"/>
<dbReference type="OMA" id="REKSWSV"/>
<dbReference type="PhylomeDB" id="Q54I58"/>
<dbReference type="Reactome" id="R-DDI-9013407">
    <property type="pathway name" value="RHOH GTPase cycle"/>
</dbReference>
<dbReference type="PRO" id="PR:Q54I58"/>
<dbReference type="Proteomes" id="UP000002195">
    <property type="component" value="Chromosome 5"/>
</dbReference>
<dbReference type="GO" id="GO:0005739">
    <property type="term" value="C:mitochondrion"/>
    <property type="evidence" value="ECO:0000318"/>
    <property type="project" value="GO_Central"/>
</dbReference>
<dbReference type="GO" id="GO:0000423">
    <property type="term" value="P:mitophagy"/>
    <property type="evidence" value="ECO:0007669"/>
    <property type="project" value="UniProtKB-ARBA"/>
</dbReference>
<dbReference type="FunFam" id="3.30.70.100:FF:000163">
    <property type="match status" value="1"/>
</dbReference>
<dbReference type="Gene3D" id="3.30.70.100">
    <property type="match status" value="2"/>
</dbReference>
<dbReference type="InterPro" id="IPR011008">
    <property type="entry name" value="Dimeric_a/b-barrel"/>
</dbReference>
<dbReference type="InterPro" id="IPR012577">
    <property type="entry name" value="NIPSNAP"/>
</dbReference>
<dbReference type="InterPro" id="IPR051557">
    <property type="entry name" value="NipSnap_domain"/>
</dbReference>
<dbReference type="PANTHER" id="PTHR21017">
    <property type="entry name" value="NIPSNAP-RELATED"/>
    <property type="match status" value="1"/>
</dbReference>
<dbReference type="PANTHER" id="PTHR21017:SF17">
    <property type="entry name" value="PROTEIN NIPSNAP"/>
    <property type="match status" value="1"/>
</dbReference>
<dbReference type="Pfam" id="PF07978">
    <property type="entry name" value="NIPSNAP"/>
    <property type="match status" value="2"/>
</dbReference>
<dbReference type="SUPFAM" id="SSF54909">
    <property type="entry name" value="Dimeric alpha+beta barrel"/>
    <property type="match status" value="2"/>
</dbReference>
<organism>
    <name type="scientific">Dictyostelium discoideum</name>
    <name type="common">Social amoeba</name>
    <dbReference type="NCBI Taxonomy" id="44689"/>
    <lineage>
        <taxon>Eukaryota</taxon>
        <taxon>Amoebozoa</taxon>
        <taxon>Evosea</taxon>
        <taxon>Eumycetozoa</taxon>
        <taxon>Dictyostelia</taxon>
        <taxon>Dictyosteliales</taxon>
        <taxon>Dictyosteliaceae</taxon>
        <taxon>Dictyostelium</taxon>
    </lineage>
</organism>